<organism>
    <name type="scientific">Clostridium tetani (strain Massachusetts / E88)</name>
    <dbReference type="NCBI Taxonomy" id="212717"/>
    <lineage>
        <taxon>Bacteria</taxon>
        <taxon>Bacillati</taxon>
        <taxon>Bacillota</taxon>
        <taxon>Clostridia</taxon>
        <taxon>Eubacteriales</taxon>
        <taxon>Clostridiaceae</taxon>
        <taxon>Clostridium</taxon>
    </lineage>
</organism>
<reference key="1">
    <citation type="journal article" date="2003" name="Proc. Natl. Acad. Sci. U.S.A.">
        <title>The genome sequence of Clostridium tetani, the causative agent of tetanus disease.</title>
        <authorList>
            <person name="Brueggemann H."/>
            <person name="Baeumer S."/>
            <person name="Fricke W.F."/>
            <person name="Wiezer A."/>
            <person name="Liesegang H."/>
            <person name="Decker I."/>
            <person name="Herzberg C."/>
            <person name="Martinez-Arias R."/>
            <person name="Merkl R."/>
            <person name="Henne A."/>
            <person name="Gottschalk G."/>
        </authorList>
    </citation>
    <scope>NUCLEOTIDE SEQUENCE [LARGE SCALE GENOMIC DNA]</scope>
    <source>
        <strain>Massachusetts / E88</strain>
    </source>
</reference>
<feature type="chain" id="PRO_0000139217" description="Methionine--tRNA ligase">
    <location>
        <begin position="1"/>
        <end position="641"/>
    </location>
</feature>
<feature type="domain" description="tRNA-binding" evidence="1">
    <location>
        <begin position="539"/>
        <end position="641"/>
    </location>
</feature>
<feature type="short sequence motif" description="'HIGH' region">
    <location>
        <begin position="13"/>
        <end position="23"/>
    </location>
</feature>
<feature type="short sequence motif" description="'KMSKS' region">
    <location>
        <begin position="298"/>
        <end position="302"/>
    </location>
</feature>
<feature type="binding site" evidence="1">
    <location>
        <position position="128"/>
    </location>
    <ligand>
        <name>Zn(2+)</name>
        <dbReference type="ChEBI" id="CHEBI:29105"/>
    </ligand>
</feature>
<feature type="binding site" evidence="1">
    <location>
        <position position="131"/>
    </location>
    <ligand>
        <name>Zn(2+)</name>
        <dbReference type="ChEBI" id="CHEBI:29105"/>
    </ligand>
</feature>
<feature type="binding site" evidence="1">
    <location>
        <position position="145"/>
    </location>
    <ligand>
        <name>Zn(2+)</name>
        <dbReference type="ChEBI" id="CHEBI:29105"/>
    </ligand>
</feature>
<feature type="binding site" evidence="1">
    <location>
        <position position="148"/>
    </location>
    <ligand>
        <name>Zn(2+)</name>
        <dbReference type="ChEBI" id="CHEBI:29105"/>
    </ligand>
</feature>
<feature type="binding site" evidence="1">
    <location>
        <position position="301"/>
    </location>
    <ligand>
        <name>ATP</name>
        <dbReference type="ChEBI" id="CHEBI:30616"/>
    </ligand>
</feature>
<accession>Q899D9</accession>
<evidence type="ECO:0000255" key="1">
    <source>
        <dbReference type="HAMAP-Rule" id="MF_01228"/>
    </source>
</evidence>
<keyword id="KW-0030">Aminoacyl-tRNA synthetase</keyword>
<keyword id="KW-0067">ATP-binding</keyword>
<keyword id="KW-0963">Cytoplasm</keyword>
<keyword id="KW-0436">Ligase</keyword>
<keyword id="KW-0479">Metal-binding</keyword>
<keyword id="KW-0547">Nucleotide-binding</keyword>
<keyword id="KW-0648">Protein biosynthesis</keyword>
<keyword id="KW-1185">Reference proteome</keyword>
<keyword id="KW-0694">RNA-binding</keyword>
<keyword id="KW-0820">tRNA-binding</keyword>
<keyword id="KW-0862">Zinc</keyword>
<name>SYM_CLOTE</name>
<protein>
    <recommendedName>
        <fullName evidence="1">Methionine--tRNA ligase</fullName>
        <ecNumber evidence="1">6.1.1.10</ecNumber>
    </recommendedName>
    <alternativeName>
        <fullName evidence="1">Methionyl-tRNA synthetase</fullName>
        <shortName evidence="1">MetRS</shortName>
    </alternativeName>
</protein>
<proteinExistence type="inferred from homology"/>
<dbReference type="EC" id="6.1.1.10" evidence="1"/>
<dbReference type="EMBL" id="AE015927">
    <property type="protein sequence ID" value="AAO34890.1"/>
    <property type="molecule type" value="Genomic_DNA"/>
</dbReference>
<dbReference type="RefSeq" id="WP_011098557.1">
    <property type="nucleotide sequence ID" value="NC_004557.1"/>
</dbReference>
<dbReference type="SMR" id="Q899D9"/>
<dbReference type="STRING" id="212717.CTC_00243"/>
<dbReference type="GeneID" id="24252646"/>
<dbReference type="KEGG" id="ctc:CTC_00243"/>
<dbReference type="HOGENOM" id="CLU_009710_9_4_9"/>
<dbReference type="OrthoDB" id="9810191at2"/>
<dbReference type="Proteomes" id="UP000001412">
    <property type="component" value="Chromosome"/>
</dbReference>
<dbReference type="GO" id="GO:0005737">
    <property type="term" value="C:cytoplasm"/>
    <property type="evidence" value="ECO:0007669"/>
    <property type="project" value="UniProtKB-SubCell"/>
</dbReference>
<dbReference type="GO" id="GO:0005524">
    <property type="term" value="F:ATP binding"/>
    <property type="evidence" value="ECO:0007669"/>
    <property type="project" value="UniProtKB-UniRule"/>
</dbReference>
<dbReference type="GO" id="GO:0046872">
    <property type="term" value="F:metal ion binding"/>
    <property type="evidence" value="ECO:0007669"/>
    <property type="project" value="UniProtKB-KW"/>
</dbReference>
<dbReference type="GO" id="GO:0004825">
    <property type="term" value="F:methionine-tRNA ligase activity"/>
    <property type="evidence" value="ECO:0007669"/>
    <property type="project" value="UniProtKB-UniRule"/>
</dbReference>
<dbReference type="GO" id="GO:0000049">
    <property type="term" value="F:tRNA binding"/>
    <property type="evidence" value="ECO:0007669"/>
    <property type="project" value="UniProtKB-KW"/>
</dbReference>
<dbReference type="GO" id="GO:0006431">
    <property type="term" value="P:methionyl-tRNA aminoacylation"/>
    <property type="evidence" value="ECO:0007669"/>
    <property type="project" value="UniProtKB-UniRule"/>
</dbReference>
<dbReference type="CDD" id="cd07957">
    <property type="entry name" value="Anticodon_Ia_Met"/>
    <property type="match status" value="1"/>
</dbReference>
<dbReference type="CDD" id="cd00814">
    <property type="entry name" value="MetRS_core"/>
    <property type="match status" value="1"/>
</dbReference>
<dbReference type="CDD" id="cd02800">
    <property type="entry name" value="tRNA_bind_EcMetRS_like"/>
    <property type="match status" value="1"/>
</dbReference>
<dbReference type="FunFam" id="1.10.730.10:FF:000026">
    <property type="entry name" value="Methionine--tRNA ligase"/>
    <property type="match status" value="1"/>
</dbReference>
<dbReference type="FunFam" id="2.170.220.10:FF:000002">
    <property type="entry name" value="Methionine--tRNA ligase"/>
    <property type="match status" value="1"/>
</dbReference>
<dbReference type="FunFam" id="2.40.50.140:FF:000042">
    <property type="entry name" value="Methionine--tRNA ligase"/>
    <property type="match status" value="1"/>
</dbReference>
<dbReference type="Gene3D" id="2.170.220.10">
    <property type="match status" value="1"/>
</dbReference>
<dbReference type="Gene3D" id="3.40.50.620">
    <property type="entry name" value="HUPs"/>
    <property type="match status" value="1"/>
</dbReference>
<dbReference type="Gene3D" id="1.10.730.10">
    <property type="entry name" value="Isoleucyl-tRNA Synthetase, Domain 1"/>
    <property type="match status" value="1"/>
</dbReference>
<dbReference type="Gene3D" id="2.40.50.140">
    <property type="entry name" value="Nucleic acid-binding proteins"/>
    <property type="match status" value="1"/>
</dbReference>
<dbReference type="HAMAP" id="MF_01228">
    <property type="entry name" value="Met_tRNA_synth_type2"/>
    <property type="match status" value="1"/>
</dbReference>
<dbReference type="InterPro" id="IPR001412">
    <property type="entry name" value="aa-tRNA-synth_I_CS"/>
</dbReference>
<dbReference type="InterPro" id="IPR041872">
    <property type="entry name" value="Anticodon_Met"/>
</dbReference>
<dbReference type="InterPro" id="IPR004495">
    <property type="entry name" value="Met-tRNA-synth_bsu_C"/>
</dbReference>
<dbReference type="InterPro" id="IPR014758">
    <property type="entry name" value="Met-tRNA_synth"/>
</dbReference>
<dbReference type="InterPro" id="IPR023457">
    <property type="entry name" value="Met-tRNA_synth_2"/>
</dbReference>
<dbReference type="InterPro" id="IPR015413">
    <property type="entry name" value="Methionyl/Leucyl_tRNA_Synth"/>
</dbReference>
<dbReference type="InterPro" id="IPR033911">
    <property type="entry name" value="MetRS_core"/>
</dbReference>
<dbReference type="InterPro" id="IPR012340">
    <property type="entry name" value="NA-bd_OB-fold"/>
</dbReference>
<dbReference type="InterPro" id="IPR014729">
    <property type="entry name" value="Rossmann-like_a/b/a_fold"/>
</dbReference>
<dbReference type="InterPro" id="IPR002547">
    <property type="entry name" value="tRNA-bd_dom"/>
</dbReference>
<dbReference type="InterPro" id="IPR009080">
    <property type="entry name" value="tRNAsynth_Ia_anticodon-bd"/>
</dbReference>
<dbReference type="NCBIfam" id="TIGR00398">
    <property type="entry name" value="metG"/>
    <property type="match status" value="1"/>
</dbReference>
<dbReference type="NCBIfam" id="TIGR00399">
    <property type="entry name" value="metG_C_term"/>
    <property type="match status" value="1"/>
</dbReference>
<dbReference type="NCBIfam" id="NF008900">
    <property type="entry name" value="PRK12267.1"/>
    <property type="match status" value="1"/>
</dbReference>
<dbReference type="PANTHER" id="PTHR43326:SF1">
    <property type="entry name" value="METHIONINE--TRNA LIGASE, MITOCHONDRIAL"/>
    <property type="match status" value="1"/>
</dbReference>
<dbReference type="PANTHER" id="PTHR43326">
    <property type="entry name" value="METHIONYL-TRNA SYNTHETASE"/>
    <property type="match status" value="1"/>
</dbReference>
<dbReference type="Pfam" id="PF19303">
    <property type="entry name" value="Anticodon_3"/>
    <property type="match status" value="1"/>
</dbReference>
<dbReference type="Pfam" id="PF09334">
    <property type="entry name" value="tRNA-synt_1g"/>
    <property type="match status" value="1"/>
</dbReference>
<dbReference type="Pfam" id="PF01588">
    <property type="entry name" value="tRNA_bind"/>
    <property type="match status" value="1"/>
</dbReference>
<dbReference type="PRINTS" id="PR01041">
    <property type="entry name" value="TRNASYNTHMET"/>
</dbReference>
<dbReference type="SUPFAM" id="SSF47323">
    <property type="entry name" value="Anticodon-binding domain of a subclass of class I aminoacyl-tRNA synthetases"/>
    <property type="match status" value="1"/>
</dbReference>
<dbReference type="SUPFAM" id="SSF50249">
    <property type="entry name" value="Nucleic acid-binding proteins"/>
    <property type="match status" value="1"/>
</dbReference>
<dbReference type="SUPFAM" id="SSF52374">
    <property type="entry name" value="Nucleotidylyl transferase"/>
    <property type="match status" value="1"/>
</dbReference>
<dbReference type="PROSITE" id="PS00178">
    <property type="entry name" value="AA_TRNA_LIGASE_I"/>
    <property type="match status" value="1"/>
</dbReference>
<dbReference type="PROSITE" id="PS50886">
    <property type="entry name" value="TRBD"/>
    <property type="match status" value="1"/>
</dbReference>
<comment type="function">
    <text evidence="1">Is required not only for elongation of protein synthesis but also for the initiation of all mRNA translation through initiator tRNA(fMet) aminoacylation.</text>
</comment>
<comment type="catalytic activity">
    <reaction evidence="1">
        <text>tRNA(Met) + L-methionine + ATP = L-methionyl-tRNA(Met) + AMP + diphosphate</text>
        <dbReference type="Rhea" id="RHEA:13481"/>
        <dbReference type="Rhea" id="RHEA-COMP:9667"/>
        <dbReference type="Rhea" id="RHEA-COMP:9698"/>
        <dbReference type="ChEBI" id="CHEBI:30616"/>
        <dbReference type="ChEBI" id="CHEBI:33019"/>
        <dbReference type="ChEBI" id="CHEBI:57844"/>
        <dbReference type="ChEBI" id="CHEBI:78442"/>
        <dbReference type="ChEBI" id="CHEBI:78530"/>
        <dbReference type="ChEBI" id="CHEBI:456215"/>
        <dbReference type="EC" id="6.1.1.10"/>
    </reaction>
</comment>
<comment type="cofactor">
    <cofactor evidence="1">
        <name>Zn(2+)</name>
        <dbReference type="ChEBI" id="CHEBI:29105"/>
    </cofactor>
    <text evidence="1">Binds 1 zinc ion per subunit.</text>
</comment>
<comment type="subunit">
    <text evidence="1">Homodimer.</text>
</comment>
<comment type="subcellular location">
    <subcellularLocation>
        <location evidence="1">Cytoplasm</location>
    </subcellularLocation>
</comment>
<comment type="similarity">
    <text evidence="1">Belongs to the class-I aminoacyl-tRNA synthetase family. MetG type 2A subfamily.</text>
</comment>
<sequence>MNKKTFYITTPIYYPSAKLHIGNTYTTVAADALARFKRLTGHDVLFLTGTDEHGQKIQRVAEEKGLKPKEYLDNMVDSIKELWKSMNISYDKFIRTTDDYHIESVQKIFKKLYEQGDIYKGEYEGWYCTPCESFWTESQLDDHNCPDCGRPVEKTKEEAYFFKMSKYADRLIKYIEENPHFIQPESRKNEMLNNFLKPGLQDLCISRTSFDWGIPVSFDNKHVIYVWIDALSNYITALGYNSDNQELLEKFWPANVHLVGKDILRFHTIYWPIMLMALGIELPKQVFGHGWLLVDGGKMSKSKGNVVDPVVLVDHFGEDTVRYYLLREIPFGSDGLFNNELFIKKINSDLANDLGNLLSRTVAMVQKYFNGIMPAPIAKEPIDDELINLALDTREKVENNMEKLKIPEVLDEIWTLIGRANKYIDETTPWILAKDEDKKDRLGTVLYNLSETLRIISVLISAFIPKTSERINEQLNVDLTTWDSIASFDGTKAGTKVVKGDALFPRIDVEAKIEELNSLKEKKEKKEIKPIKEEITIDDFDKIDLRVVKVISCEPVKGAKKLLKLKVDLGGEERQVISGIAQYYKPEELVGKSVVLVANLKPAKLRGELSQGMILAAATDDDSKLFTVSIPGELPTGSQVR</sequence>
<gene>
    <name evidence="1" type="primary">metG</name>
    <name type="ordered locus">CTC_00243</name>
</gene>